<reference key="1">
    <citation type="journal article" date="2003" name="Nature">
        <title>The genome sequence of Bacillus anthracis Ames and comparison to closely related bacteria.</title>
        <authorList>
            <person name="Read T.D."/>
            <person name="Peterson S.N."/>
            <person name="Tourasse N.J."/>
            <person name="Baillie L.W."/>
            <person name="Paulsen I.T."/>
            <person name="Nelson K.E."/>
            <person name="Tettelin H."/>
            <person name="Fouts D.E."/>
            <person name="Eisen J.A."/>
            <person name="Gill S.R."/>
            <person name="Holtzapple E.K."/>
            <person name="Okstad O.A."/>
            <person name="Helgason E."/>
            <person name="Rilstone J."/>
            <person name="Wu M."/>
            <person name="Kolonay J.F."/>
            <person name="Beanan M.J."/>
            <person name="Dodson R.J."/>
            <person name="Brinkac L.M."/>
            <person name="Gwinn M.L."/>
            <person name="DeBoy R.T."/>
            <person name="Madpu R."/>
            <person name="Daugherty S.C."/>
            <person name="Durkin A.S."/>
            <person name="Haft D.H."/>
            <person name="Nelson W.C."/>
            <person name="Peterson J.D."/>
            <person name="Pop M."/>
            <person name="Khouri H.M."/>
            <person name="Radune D."/>
            <person name="Benton J.L."/>
            <person name="Mahamoud Y."/>
            <person name="Jiang L."/>
            <person name="Hance I.R."/>
            <person name="Weidman J.F."/>
            <person name="Berry K.J."/>
            <person name="Plaut R.D."/>
            <person name="Wolf A.M."/>
            <person name="Watkins K.L."/>
            <person name="Nierman W.C."/>
            <person name="Hazen A."/>
            <person name="Cline R.T."/>
            <person name="Redmond C."/>
            <person name="Thwaite J.E."/>
            <person name="White O."/>
            <person name="Salzberg S.L."/>
            <person name="Thomason B."/>
            <person name="Friedlander A.M."/>
            <person name="Koehler T.M."/>
            <person name="Hanna P.C."/>
            <person name="Kolstoe A.-B."/>
            <person name="Fraser C.M."/>
        </authorList>
    </citation>
    <scope>NUCLEOTIDE SEQUENCE [LARGE SCALE GENOMIC DNA]</scope>
    <source>
        <strain>Ames / isolate Porton</strain>
    </source>
</reference>
<reference key="2">
    <citation type="journal article" date="2009" name="J. Bacteriol.">
        <title>The complete genome sequence of Bacillus anthracis Ames 'Ancestor'.</title>
        <authorList>
            <person name="Ravel J."/>
            <person name="Jiang L."/>
            <person name="Stanley S.T."/>
            <person name="Wilson M.R."/>
            <person name="Decker R.S."/>
            <person name="Read T.D."/>
            <person name="Worsham P."/>
            <person name="Keim P.S."/>
            <person name="Salzberg S.L."/>
            <person name="Fraser-Liggett C.M."/>
            <person name="Rasko D.A."/>
        </authorList>
    </citation>
    <scope>NUCLEOTIDE SEQUENCE [LARGE SCALE GENOMIC DNA]</scope>
    <source>
        <strain>Ames ancestor</strain>
    </source>
</reference>
<reference key="3">
    <citation type="submission" date="2004-01" db="EMBL/GenBank/DDBJ databases">
        <title>Complete genome sequence of Bacillus anthracis Sterne.</title>
        <authorList>
            <person name="Brettin T.S."/>
            <person name="Bruce D."/>
            <person name="Challacombe J.F."/>
            <person name="Gilna P."/>
            <person name="Han C."/>
            <person name="Hill K."/>
            <person name="Hitchcock P."/>
            <person name="Jackson P."/>
            <person name="Keim P."/>
            <person name="Longmire J."/>
            <person name="Lucas S."/>
            <person name="Okinaka R."/>
            <person name="Richardson P."/>
            <person name="Rubin E."/>
            <person name="Tice H."/>
        </authorList>
    </citation>
    <scope>NUCLEOTIDE SEQUENCE [LARGE SCALE GENOMIC DNA]</scope>
    <source>
        <strain>Sterne</strain>
    </source>
</reference>
<name>CSPD_BACAN</name>
<feature type="chain" id="PRO_0000100288" description="Cold shock-like protein CspD">
    <location>
        <begin position="1"/>
        <end position="66"/>
    </location>
</feature>
<feature type="domain" description="CSD">
    <location>
        <begin position="4"/>
        <end position="63"/>
    </location>
</feature>
<gene>
    <name type="primary">cspD</name>
    <name type="ordered locus">BA_5115</name>
    <name type="ordered locus">GBAA_5115</name>
    <name type="ordered locus">BAS4754</name>
</gene>
<evidence type="ECO:0000250" key="1"/>
<evidence type="ECO:0000305" key="2"/>
<dbReference type="EMBL" id="AE016879">
    <property type="protein sequence ID" value="AAP28787.1"/>
    <property type="molecule type" value="Genomic_DNA"/>
</dbReference>
<dbReference type="EMBL" id="AE017334">
    <property type="protein sequence ID" value="AAT34243.1"/>
    <property type="molecule type" value="Genomic_DNA"/>
</dbReference>
<dbReference type="EMBL" id="AE017225">
    <property type="protein sequence ID" value="AAT57048.1"/>
    <property type="molecule type" value="Genomic_DNA"/>
</dbReference>
<dbReference type="RefSeq" id="NP_847301.1">
    <property type="nucleotide sequence ID" value="NC_003997.3"/>
</dbReference>
<dbReference type="RefSeq" id="WP_001193054.1">
    <property type="nucleotide sequence ID" value="NZ_WXXJ01000032.1"/>
</dbReference>
<dbReference type="RefSeq" id="YP_030998.1">
    <property type="nucleotide sequence ID" value="NC_005945.1"/>
</dbReference>
<dbReference type="SMR" id="Q81K90"/>
<dbReference type="STRING" id="261594.GBAA_5115"/>
<dbReference type="DNASU" id="1084426"/>
<dbReference type="GeneID" id="93006229"/>
<dbReference type="KEGG" id="ban:BA_5115"/>
<dbReference type="KEGG" id="bar:GBAA_5115"/>
<dbReference type="KEGG" id="bat:BAS4754"/>
<dbReference type="PATRIC" id="fig|198094.11.peg.5076"/>
<dbReference type="eggNOG" id="COG1278">
    <property type="taxonomic scope" value="Bacteria"/>
</dbReference>
<dbReference type="HOGENOM" id="CLU_117621_6_1_9"/>
<dbReference type="OMA" id="HYSTIKM"/>
<dbReference type="OrthoDB" id="9805039at2"/>
<dbReference type="Proteomes" id="UP000000427">
    <property type="component" value="Chromosome"/>
</dbReference>
<dbReference type="Proteomes" id="UP000000594">
    <property type="component" value="Chromosome"/>
</dbReference>
<dbReference type="GO" id="GO:0005737">
    <property type="term" value="C:cytoplasm"/>
    <property type="evidence" value="ECO:0007669"/>
    <property type="project" value="UniProtKB-SubCell"/>
</dbReference>
<dbReference type="GO" id="GO:0003677">
    <property type="term" value="F:DNA binding"/>
    <property type="evidence" value="ECO:0007669"/>
    <property type="project" value="UniProtKB-KW"/>
</dbReference>
<dbReference type="CDD" id="cd04458">
    <property type="entry name" value="CSP_CDS"/>
    <property type="match status" value="1"/>
</dbReference>
<dbReference type="FunFam" id="2.40.50.140:FF:000006">
    <property type="entry name" value="Cold shock protein CspC"/>
    <property type="match status" value="1"/>
</dbReference>
<dbReference type="Gene3D" id="6.20.370.130">
    <property type="match status" value="1"/>
</dbReference>
<dbReference type="Gene3D" id="2.40.50.140">
    <property type="entry name" value="Nucleic acid-binding proteins"/>
    <property type="match status" value="1"/>
</dbReference>
<dbReference type="InterPro" id="IPR012156">
    <property type="entry name" value="Cold_shock_CspA"/>
</dbReference>
<dbReference type="InterPro" id="IPR050181">
    <property type="entry name" value="Cold_shock_domain"/>
</dbReference>
<dbReference type="InterPro" id="IPR011129">
    <property type="entry name" value="CSD"/>
</dbReference>
<dbReference type="InterPro" id="IPR019844">
    <property type="entry name" value="CSD_CS"/>
</dbReference>
<dbReference type="InterPro" id="IPR002059">
    <property type="entry name" value="CSP_DNA-bd"/>
</dbReference>
<dbReference type="InterPro" id="IPR012340">
    <property type="entry name" value="NA-bd_OB-fold"/>
</dbReference>
<dbReference type="PANTHER" id="PTHR11544">
    <property type="entry name" value="COLD SHOCK DOMAIN CONTAINING PROTEINS"/>
    <property type="match status" value="1"/>
</dbReference>
<dbReference type="Pfam" id="PF00313">
    <property type="entry name" value="CSD"/>
    <property type="match status" value="1"/>
</dbReference>
<dbReference type="PIRSF" id="PIRSF002599">
    <property type="entry name" value="Cold_shock_A"/>
    <property type="match status" value="1"/>
</dbReference>
<dbReference type="PRINTS" id="PR00050">
    <property type="entry name" value="COLDSHOCK"/>
</dbReference>
<dbReference type="SMART" id="SM00357">
    <property type="entry name" value="CSP"/>
    <property type="match status" value="1"/>
</dbReference>
<dbReference type="SUPFAM" id="SSF50249">
    <property type="entry name" value="Nucleic acid-binding proteins"/>
    <property type="match status" value="1"/>
</dbReference>
<dbReference type="PROSITE" id="PS00352">
    <property type="entry name" value="CSD_1"/>
    <property type="match status" value="1"/>
</dbReference>
<dbReference type="PROSITE" id="PS51857">
    <property type="entry name" value="CSD_2"/>
    <property type="match status" value="1"/>
</dbReference>
<protein>
    <recommendedName>
        <fullName>Cold shock-like protein CspD</fullName>
    </recommendedName>
</protein>
<accession>Q81K90</accession>
<accession>Q6HRP0</accession>
<accession>Q6KL07</accession>
<comment type="subunit">
    <text evidence="2">Homodimer.</text>
</comment>
<comment type="subcellular location">
    <subcellularLocation>
        <location evidence="1">Cytoplasm</location>
    </subcellularLocation>
</comment>
<organism>
    <name type="scientific">Bacillus anthracis</name>
    <dbReference type="NCBI Taxonomy" id="1392"/>
    <lineage>
        <taxon>Bacteria</taxon>
        <taxon>Bacillati</taxon>
        <taxon>Bacillota</taxon>
        <taxon>Bacilli</taxon>
        <taxon>Bacillales</taxon>
        <taxon>Bacillaceae</taxon>
        <taxon>Bacillus</taxon>
        <taxon>Bacillus cereus group</taxon>
    </lineage>
</organism>
<keyword id="KW-0010">Activator</keyword>
<keyword id="KW-0963">Cytoplasm</keyword>
<keyword id="KW-0238">DNA-binding</keyword>
<keyword id="KW-1185">Reference proteome</keyword>
<keyword id="KW-0804">Transcription</keyword>
<keyword id="KW-0805">Transcription regulation</keyword>
<sequence>MQTGKVKWFNSEKGFGFIEVEGGDDVFVHFSAIQGDGFKTLEEGQEVSFEIVEGNRGPQAANVTKN</sequence>
<proteinExistence type="inferred from homology"/>